<keyword id="KW-0002">3D-structure</keyword>
<keyword id="KW-0059">Arsenical resistance</keyword>
<keyword id="KW-0963">Cytoplasm</keyword>
<keyword id="KW-1015">Disulfide bond</keyword>
<keyword id="KW-0479">Metal-binding</keyword>
<keyword id="KW-0560">Oxidoreductase</keyword>
<keyword id="KW-0614">Plasmid</keyword>
<keyword id="KW-0630">Potassium</keyword>
<keyword id="KW-0676">Redox-active center</keyword>
<accession>P0A006</accession>
<accession>P30330</accession>
<accession>Q6Y0M0</accession>
<accession>Q6Y0M4</accession>
<accession>Q6Y0N2</accession>
<accession>Q8GQH3</accession>
<name>ARSC_STAAU</name>
<protein>
    <recommendedName>
        <fullName evidence="1 12">Arsenate reductase</fullName>
        <ecNumber evidence="2 4 5 6 7 10 11">1.20.4.4</ecNumber>
    </recommendedName>
    <alternativeName>
        <fullName>Arsenical pump modifier</fullName>
    </alternativeName>
    <alternativeName>
        <fullName>Protein ArsC</fullName>
    </alternativeName>
</protein>
<comment type="function">
    <text evidence="2 3 4 5 6 7 10 11">Catalyzes the reduction of arsenate [As(V)] to arsenite [As(III)] (PubMed:10606519, PubMed:11862551, PubMed:12072565, PubMed:12682056, PubMed:1409657, PubMed:16797027, PubMed:8003493). In vitro, also has low phosphatase activity with para-nitrophenyl phosphate (pNPP) as substrate (PubMed:11573087).</text>
</comment>
<comment type="catalytic activity">
    <reaction evidence="1 2 4 5 6 7 10 11">
        <text>arsenate + [thioredoxin]-dithiol + H(+) = arsenite + [thioredoxin]-disulfide + H2O</text>
        <dbReference type="Rhea" id="RHEA:43848"/>
        <dbReference type="Rhea" id="RHEA-COMP:10698"/>
        <dbReference type="Rhea" id="RHEA-COMP:10700"/>
        <dbReference type="ChEBI" id="CHEBI:15377"/>
        <dbReference type="ChEBI" id="CHEBI:15378"/>
        <dbReference type="ChEBI" id="CHEBI:29242"/>
        <dbReference type="ChEBI" id="CHEBI:29950"/>
        <dbReference type="ChEBI" id="CHEBI:48597"/>
        <dbReference type="ChEBI" id="CHEBI:50058"/>
        <dbReference type="EC" id="1.20.4.4"/>
    </reaction>
</comment>
<comment type="activity regulation">
    <text evidence="4 6 10">Potassium binding stabilizes the enzyme and increases its specific activity (PubMed:12682056, PubMed:16797027). Activity is also stimulated by sulfate (PubMed:16797027). Inhibited by arsenite (mixed inhibitor) (PubMed:11862551).</text>
</comment>
<comment type="biophysicochemical properties">
    <kinetics>
        <KM evidence="11">0.8 uM for arsenate (below 1 mM arsenate)</KM>
        <KM evidence="11">2 mM for arsenate (above 1 mM arsenate)</KM>
        <KM evidence="2">0.066 uM for arsenate</KM>
        <KM evidence="4">68 uM for arsenate</KM>
        <KM evidence="6 10">9 uM for arsenate (in the presence of KCl)</KM>
        <KM evidence="6 10">22 uM for arsenate (in the presence of NaCl)</KM>
        <KM evidence="10">61 uM for arsenate (in the presence of Na(2)SO(4))</KM>
        <KM evidence="10">81 uM for arsenate (in the presence of K(2)SO(4))</KM>
        <KM evidence="3">146 mM for para-nitrophenyl phosphate (reduced form only)</KM>
        <Vmax evidence="11">200.0 nmol/min/mg enzyme (below 1 mM arsenate)</Vmax>
        <Vmax evidence="11">450.0 nmol/min/mg enzyme (above 1 mM arsenate)</Vmax>
        <text evidence="2 3 6 10">kcat is 4.5 min(-1) with arsenate as substrate (at 2 uM arsenate) and kcat is 9.9 min(-1) with arsenate as substrate (at 10 mM arsenate) (PubMed:10606519). kcat is 54 min(-1) in the presence of KCl (PubMed:12682056, PubMed:16797027). kcat is 35 min(-1) in the presence of NaCl (PubMed:12682056, PubMed:16797027). kcat is 172 min(-1) in the presence of Na(2)SO(4) (PubMed:16797027). kcat is 219 min(-1) in the presence of K(2)SO(4) (PubMed:16797027). kcat is 0.53 min(-1) for the phosphatase activity with para-nitrophenyl phosphate as substrate (PubMed:11573087).</text>
    </kinetics>
    <phDependence>
        <text evidence="4">Optimum pH is 8.</text>
    </phDependence>
</comment>
<comment type="subunit">
    <text>Monomer.</text>
</comment>
<comment type="subcellular location">
    <subcellularLocation>
        <location evidence="1 7">Cytoplasm</location>
    </subcellularLocation>
</comment>
<comment type="induction">
    <text evidence="9">Induced by arsenate [As(V)], arsenite [As(III)], and antimonite [Sb(III)].</text>
</comment>
<comment type="PTM">
    <text evidence="16 17">Cys-89 performs a nucleophilic attack on a Cys-10-Cys-82 intermediate, forming another disulfide intermediate with Cys-82.</text>
</comment>
<comment type="mass spectrometry" mass="14810.5" method="Electrospray" evidence="11"/>
<comment type="mass spectrometry" mass="14812.0" method="Electrospray" evidence="2"/>
<comment type="disruption phenotype">
    <text evidence="9">Deletion of the gene leads to a complete loss of arsenate resistance, but does not affect arsenite or antimony resistance.</text>
</comment>
<comment type="similarity">
    <text evidence="1 14">Belongs to the low molecular weight phosphotyrosine protein phosphatase family. Thioredoxin-coupled ArsC subfamily.</text>
</comment>
<reference key="1">
    <citation type="journal article" date="1992" name="J. Bacteriol.">
        <title>Regulation and expression of the arsenic resistance operon from Staphylococcus aureus plasmid pI258.</title>
        <authorList>
            <person name="Ji G."/>
            <person name="Silver S."/>
        </authorList>
    </citation>
    <scope>NUCLEOTIDE SEQUENCE [GENOMIC DNA]</scope>
    <scope>INDUCTION</scope>
    <scope>DISRUPTION PHENOTYPE</scope>
    <source>
        <plasmid>pI258</plasmid>
    </source>
</reference>
<reference key="2">
    <citation type="submission" date="2002-12" db="EMBL/GenBank/DDBJ databases">
        <title>Characterization of a collection of clinical Staphylococcus aureus wound isolates.</title>
        <authorList>
            <person name="Tibor L."/>
            <person name="Cramton S.E."/>
            <person name="Goetz F."/>
            <person name="Hunt T.K."/>
        </authorList>
    </citation>
    <scope>NUCLEOTIDE SEQUENCE [GENOMIC DNA]</scope>
    <source>
        <strain>SW1</strain>
        <strain>SW18</strain>
        <strain>SW24</strain>
        <strain>SW4</strain>
    </source>
</reference>
<reference key="3">
    <citation type="journal article" date="1992" name="Proc. Natl. Acad. Sci. U.S.A.">
        <title>Reduction of arsenate to arsenite by the ArsC protein of the arsenic resistance operon of Staphylococcus aureus plasmid pI258.</title>
        <authorList>
            <person name="Ji G."/>
            <person name="Silver S."/>
        </authorList>
    </citation>
    <scope>FUNCTION</scope>
    <scope>CATALYTIC ACTIVITY</scope>
    <scope>SUBCELLULAR LOCATION</scope>
    <source>
        <plasmid>pI258</plasmid>
    </source>
</reference>
<reference key="4">
    <citation type="journal article" date="1994" name="Biochemistry">
        <title>Arsenate reductase of Staphylococcus aureus plasmid pI258.</title>
        <authorList>
            <person name="Ji G."/>
            <person name="Garber E.A.E."/>
            <person name="Armes L.G."/>
            <person name="Chen C.-M."/>
            <person name="Fuchs J.A."/>
            <person name="Silver S."/>
        </authorList>
    </citation>
    <scope>FUNCTION</scope>
    <scope>CATALYTIC ACTIVITY</scope>
    <scope>BIOPHYSICOCHEMICAL PROPERTIES</scope>
    <scope>MASS SPECTROMETRY</scope>
    <source>
        <plasmid>pI258</plasmid>
    </source>
</reference>
<reference key="5">
    <citation type="journal article" date="1999" name="Biochemistry">
        <title>The essential catalytic redox couple in arsenate reductase from Staphylococcus aureus.</title>
        <authorList>
            <person name="Messens J."/>
            <person name="Hayburn G."/>
            <person name="Desmyter A."/>
            <person name="Laus G."/>
            <person name="Wyns L."/>
        </authorList>
    </citation>
    <scope>FUNCTION</scope>
    <scope>CATALYTIC ACTIVITY</scope>
    <scope>BIOPHYSICOCHEMICAL PROPERTIES</scope>
    <scope>MASS SPECTROMETRY</scope>
    <scope>MUTAGENESIS OF CYS-10; CYS-15; CYS-82 AND CYS-89</scope>
    <scope>REACTION MECHANISM</scope>
    <source>
        <plasmid>pI258</plasmid>
    </source>
</reference>
<reference key="6">
    <citation type="journal article" date="2002" name="J. Biol. Inorg. Chem.">
        <title>Kinetics and active site dynamics of Staphylococcus aureus arsenate reductase.</title>
        <authorList>
            <person name="Messens J."/>
            <person name="Martins J.C."/>
            <person name="Brosens E."/>
            <person name="Van Belle K."/>
            <person name="Jacobs D.M."/>
            <person name="Willem R."/>
            <person name="Wyns L."/>
        </authorList>
    </citation>
    <scope>FUNCTION</scope>
    <scope>CATALYTIC ACTIVITY</scope>
    <scope>ACTIVITY REGULATION</scope>
    <scope>BIOPHYSICOCHEMICAL PROPERTIES</scope>
    <scope>STRUCTURE BY NMR</scope>
    <source>
        <plasmid>pI258</plasmid>
    </source>
</reference>
<reference key="7">
    <citation type="journal article" date="2003" name="J. Biol. Chem.">
        <title>Specific potassium binding stabilizes pI258 arsenate reductase from Staphylococcus aureus.</title>
        <authorList>
            <person name="Lah N."/>
            <person name="Lah J."/>
            <person name="Zegers I."/>
            <person name="Wyns L."/>
            <person name="Messens J."/>
        </authorList>
    </citation>
    <scope>FUNCTION</scope>
    <scope>CATALYTIC ACTIVITY</scope>
    <scope>ACTIVITY REGULATION</scope>
    <scope>BIOPHYSICOCHEMICAL PROPERTIES</scope>
    <scope>METAL-BINDING</scope>
    <scope>MUTAGENESIS OF ASN-13; GLU-21; SER-36 AND ASP-65</scope>
</reference>
<reference evidence="18 19" key="8">
    <citation type="journal article" date="2001" name="Nat. Struct. Biol.">
        <title>Arsenate reductase from S. aureus plasmid pI258 is a phosphatase drafted for redox duty.</title>
        <authorList>
            <person name="Zegers I."/>
            <person name="Martins J.C."/>
            <person name="Willem R."/>
            <person name="Wyns L."/>
            <person name="Messens J."/>
        </authorList>
    </citation>
    <scope>X-RAY CRYSTALLOGRAPHY (1.12 ANGSTROMS) OF REDUCED AND OXIDIZED FORM OF DOUBLE MUTANT SER-10/ALA-15 IN COMPLEX WITH POTASSIUM</scope>
    <scope>FUNCTION AS A PHOSPHATASE</scope>
    <scope>BIOPHYSICOCHEMICAL PROPERTIES</scope>
    <scope>MUTAGENESIS OF CYS-10; CYS-15 AND CYS-89</scope>
    <scope>ACTIVE SITE</scope>
    <scope>REACTION MECHANISM</scope>
    <source>
        <plasmid>pI258</plasmid>
    </source>
</reference>
<reference evidence="20 21 22" key="9">
    <citation type="journal article" date="2002" name="Proc. Natl. Acad. Sci. U.S.A.">
        <title>All intermediates of the arsenate reductase mechanism, including an intramolecular dynamic disulfide cascade.</title>
        <authorList>
            <person name="Messens J."/>
            <person name="Martins J.C."/>
            <person name="Van Belle K."/>
            <person name="Brosens E."/>
            <person name="Desmyter A."/>
            <person name="De Gieter M."/>
            <person name="Wieruszeski J.-M."/>
            <person name="Willem R."/>
            <person name="Wyns L."/>
            <person name="Zegers I."/>
        </authorList>
    </citation>
    <scope>X-RAY CRYSTALLOGRAPHY (1.4 ANGSTROMS) OF WILD-TYPE AND OF MUTANTS ALA-15 AND LEU-89 IN COMPLEXES WITH POTASSIUM</scope>
    <scope>FUNCTION</scope>
    <scope>CATALYTIC ACTIVITY</scope>
    <scope>MUTAGENESIS OF ARG-16; SER-17; CYS-89 AND ASP-105</scope>
    <scope>STRUCTURE BY NMR OF MUTANTS CYS-82 AND CYS-89</scope>
    <scope>ACTIVE SITE</scope>
    <scope>REACTION MECHANISM</scope>
    <source>
        <plasmid>pI258</plasmid>
    </source>
</reference>
<reference evidence="23 24" key="10">
    <citation type="journal article" date="2004" name="Acta Crystallogr. D">
        <title>The structure of a triple mutant of pI258 arsenate reductase from Staphylococcus aureus and its 5-thio-2-nitrobenzoic acid adduct.</title>
        <authorList>
            <person name="Messens J."/>
            <person name="Van Molle I."/>
            <person name="Vanhaesebrouck P."/>
            <person name="Van Belle K."/>
            <person name="Wahni K."/>
            <person name="Martins J.C."/>
            <person name="Wyns L."/>
            <person name="Loris R."/>
        </authorList>
    </citation>
    <scope>X-RAY CRYSTALLOGRAPHY (1.50 ANGSTROMS) OF TRIPLE MUTANT SER-10/ALA-15/SER-82 IN COMPLEX WITH 5-THIO-2-NITROBENZOIC ACID AND POTASSIUM</scope>
</reference>
<reference evidence="25 26" key="11">
    <citation type="journal article" date="2006" name="J. Mol. Biol.">
        <title>Interplay between ion binding and catalysis in the thioredoxin-coupled arsenate reductase family.</title>
        <authorList>
            <person name="Roos G."/>
            <person name="Buts L."/>
            <person name="Van Belle K."/>
            <person name="Brosens E."/>
            <person name="Geerlings P."/>
            <person name="Loris R."/>
            <person name="Wyns L."/>
            <person name="Messens J."/>
        </authorList>
    </citation>
    <scope>X-RAY CRYSTALLOGRAPHY (1.50 ANGSTROMS) OF MUTANT GLN-62 IN COMPLEX WITH SODIUM AND OF DOUBLE MUTANT SER-10/ALA-15 IN COMPLEX WITH POTASSIUM</scope>
    <scope>FUNCTION</scope>
    <scope>CATALYTIC ACTIVITY</scope>
    <scope>ACTIVITY REGULATION</scope>
    <scope>BIOPHYSICOCHEMICAL PROPERTIES</scope>
    <scope>MUTAGENESIS OF HIS-62</scope>
</reference>
<organism>
    <name type="scientific">Staphylococcus aureus</name>
    <dbReference type="NCBI Taxonomy" id="1280"/>
    <lineage>
        <taxon>Bacteria</taxon>
        <taxon>Bacillati</taxon>
        <taxon>Bacillota</taxon>
        <taxon>Bacilli</taxon>
        <taxon>Bacillales</taxon>
        <taxon>Staphylococcaceae</taxon>
        <taxon>Staphylococcus</taxon>
    </lineage>
</organism>
<evidence type="ECO:0000255" key="1">
    <source>
        <dbReference type="HAMAP-Rule" id="MF_01624"/>
    </source>
</evidence>
<evidence type="ECO:0000269" key="2">
    <source>
    </source>
</evidence>
<evidence type="ECO:0000269" key="3">
    <source>
    </source>
</evidence>
<evidence type="ECO:0000269" key="4">
    <source>
    </source>
</evidence>
<evidence type="ECO:0000269" key="5">
    <source>
    </source>
</evidence>
<evidence type="ECO:0000269" key="6">
    <source>
    </source>
</evidence>
<evidence type="ECO:0000269" key="7">
    <source>
    </source>
</evidence>
<evidence type="ECO:0000269" key="8">
    <source>
    </source>
</evidence>
<evidence type="ECO:0000269" key="9">
    <source>
    </source>
</evidence>
<evidence type="ECO:0000269" key="10">
    <source>
    </source>
</evidence>
<evidence type="ECO:0000269" key="11">
    <source>
    </source>
</evidence>
<evidence type="ECO:0000303" key="12">
    <source>
    </source>
</evidence>
<evidence type="ECO:0000303" key="13">
    <source>
    </source>
</evidence>
<evidence type="ECO:0000305" key="14"/>
<evidence type="ECO:0000305" key="15">
    <source>
    </source>
</evidence>
<evidence type="ECO:0000305" key="16">
    <source>
    </source>
</evidence>
<evidence type="ECO:0000305" key="17">
    <source>
    </source>
</evidence>
<evidence type="ECO:0007744" key="18">
    <source>
        <dbReference type="PDB" id="1JF8"/>
    </source>
</evidence>
<evidence type="ECO:0007744" key="19">
    <source>
        <dbReference type="PDB" id="1JFV"/>
    </source>
</evidence>
<evidence type="ECO:0007744" key="20">
    <source>
        <dbReference type="PDB" id="1LJL"/>
    </source>
</evidence>
<evidence type="ECO:0007744" key="21">
    <source>
        <dbReference type="PDB" id="1LJU"/>
    </source>
</evidence>
<evidence type="ECO:0007744" key="22">
    <source>
        <dbReference type="PDB" id="1LK0"/>
    </source>
</evidence>
<evidence type="ECO:0007744" key="23">
    <source>
        <dbReference type="PDB" id="1RXE"/>
    </source>
</evidence>
<evidence type="ECO:0007744" key="24">
    <source>
        <dbReference type="PDB" id="1RXI"/>
    </source>
</evidence>
<evidence type="ECO:0007744" key="25">
    <source>
        <dbReference type="PDB" id="2CD7"/>
    </source>
</evidence>
<evidence type="ECO:0007744" key="26">
    <source>
        <dbReference type="PDB" id="2FXI"/>
    </source>
</evidence>
<evidence type="ECO:0007829" key="27">
    <source>
        <dbReference type="PDB" id="1JF8"/>
    </source>
</evidence>
<dbReference type="EC" id="1.20.4.4" evidence="2 4 5 6 7 10 11"/>
<dbReference type="EMBL" id="M86824">
    <property type="protein sequence ID" value="AAA25638.1"/>
    <property type="molecule type" value="Genomic_DNA"/>
</dbReference>
<dbReference type="EMBL" id="AY194061">
    <property type="protein sequence ID" value="AAP32334.1"/>
    <property type="molecule type" value="Genomic_DNA"/>
</dbReference>
<dbReference type="EMBL" id="AY194062">
    <property type="protein sequence ID" value="AAP32338.1"/>
    <property type="molecule type" value="Genomic_DNA"/>
</dbReference>
<dbReference type="EMBL" id="AY194064">
    <property type="protein sequence ID" value="AAP32346.1"/>
    <property type="molecule type" value="Genomic_DNA"/>
</dbReference>
<dbReference type="EMBL" id="AY194065">
    <property type="protein sequence ID" value="AAP32350.1"/>
    <property type="molecule type" value="Genomic_DNA"/>
</dbReference>
<dbReference type="PIR" id="A53641">
    <property type="entry name" value="A53641"/>
</dbReference>
<dbReference type="PIR" id="D41903">
    <property type="entry name" value="D41903"/>
</dbReference>
<dbReference type="RefSeq" id="WP_000163242.1">
    <property type="nucleotide sequence ID" value="NZ_WKIT01000072.1"/>
</dbReference>
<dbReference type="RefSeq" id="WP_000358995.1">
    <property type="nucleotide sequence ID" value="NZ_WWCF01000102.1"/>
</dbReference>
<dbReference type="RefSeq" id="YP_001573918.1">
    <property type="nucleotide sequence ID" value="NC_010077.1"/>
</dbReference>
<dbReference type="RefSeq" id="YP_001715971.1">
    <property type="nucleotide sequence ID" value="NC_010419.1"/>
</dbReference>
<dbReference type="RefSeq" id="YP_006937217.1">
    <property type="nucleotide sequence ID" value="NC_013292.1"/>
</dbReference>
<dbReference type="RefSeq" id="YP_006937607.1">
    <property type="nucleotide sequence ID" value="NC_013319.1"/>
</dbReference>
<dbReference type="RefSeq" id="YP_006937727.1">
    <property type="nucleotide sequence ID" value="NC_013322.1"/>
</dbReference>
<dbReference type="RefSeq" id="YP_006937753.1">
    <property type="nucleotide sequence ID" value="NC_013323.1"/>
</dbReference>
<dbReference type="RefSeq" id="YP_006938161.1">
    <property type="nucleotide sequence ID" value="NC_013333.1"/>
</dbReference>
<dbReference type="RefSeq" id="YP_006938435.1">
    <property type="nucleotide sequence ID" value="NC_013340.1"/>
</dbReference>
<dbReference type="RefSeq" id="YP_006938641.1">
    <property type="nucleotide sequence ID" value="NC_013347.1"/>
</dbReference>
<dbReference type="RefSeq" id="YP_006938712.1">
    <property type="nucleotide sequence ID" value="NC_013349.1"/>
</dbReference>
<dbReference type="RefSeq" id="YP_006938775.1">
    <property type="nucleotide sequence ID" value="NC_013352.1"/>
</dbReference>
<dbReference type="RefSeq" id="YP_006939395.1">
    <property type="nucleotide sequence ID" value="NC_018965.1"/>
</dbReference>
<dbReference type="RefSeq" id="YP_006940871.1">
    <property type="nucleotide sequence ID" value="NC_019009.1"/>
</dbReference>
<dbReference type="RefSeq" id="YP_536862.1">
    <property type="nucleotide sequence ID" value="NC_007931.1"/>
</dbReference>
<dbReference type="PDB" id="1JF8">
    <property type="method" value="X-ray"/>
    <property type="resolution" value="1.12 A"/>
    <property type="chains" value="A=1-131"/>
</dbReference>
<dbReference type="PDB" id="1JFV">
    <property type="method" value="X-ray"/>
    <property type="resolution" value="2.00 A"/>
    <property type="chains" value="A=1-131"/>
</dbReference>
<dbReference type="PDB" id="1LJL">
    <property type="method" value="X-ray"/>
    <property type="resolution" value="2.01 A"/>
    <property type="chains" value="A=1-131"/>
</dbReference>
<dbReference type="PDB" id="1LJU">
    <property type="method" value="X-ray"/>
    <property type="resolution" value="1.40 A"/>
    <property type="chains" value="A=1-131"/>
</dbReference>
<dbReference type="PDB" id="1LK0">
    <property type="method" value="X-ray"/>
    <property type="resolution" value="1.60 A"/>
    <property type="chains" value="A/B=1-131"/>
</dbReference>
<dbReference type="PDB" id="1RXE">
    <property type="method" value="X-ray"/>
    <property type="resolution" value="1.70 A"/>
    <property type="chains" value="A=1-131"/>
</dbReference>
<dbReference type="PDB" id="1RXI">
    <property type="method" value="X-ray"/>
    <property type="resolution" value="1.50 A"/>
    <property type="chains" value="A=1-131"/>
</dbReference>
<dbReference type="PDB" id="2CD7">
    <property type="method" value="X-ray"/>
    <property type="resolution" value="1.50 A"/>
    <property type="chains" value="A=1-131"/>
</dbReference>
<dbReference type="PDB" id="2FXI">
    <property type="method" value="X-ray"/>
    <property type="resolution" value="1.80 A"/>
    <property type="chains" value="A=1-131"/>
</dbReference>
<dbReference type="PDBsum" id="1JF8"/>
<dbReference type="PDBsum" id="1JFV"/>
<dbReference type="PDBsum" id="1LJL"/>
<dbReference type="PDBsum" id="1LJU"/>
<dbReference type="PDBsum" id="1LK0"/>
<dbReference type="PDBsum" id="1RXE"/>
<dbReference type="PDBsum" id="1RXI"/>
<dbReference type="PDBsum" id="2CD7"/>
<dbReference type="PDBsum" id="2FXI"/>
<dbReference type="BMRB" id="P0A006"/>
<dbReference type="SMR" id="P0A006"/>
<dbReference type="ChEMBL" id="CHEMBL4523173"/>
<dbReference type="DrugBank" id="DB02763">
    <property type="generic name" value="5-Mercapto-2-Nitro-Benzoic Acid"/>
</dbReference>
<dbReference type="DrugBank" id="DB03138">
    <property type="generic name" value="Perchlorate"/>
</dbReference>
<dbReference type="DrugBank" id="DB03352">
    <property type="generic name" value="S-Arsonocysteine"/>
</dbReference>
<dbReference type="OMA" id="VTMGCNV"/>
<dbReference type="BioCyc" id="MetaCyc:MONOMER-10862"/>
<dbReference type="BRENDA" id="1.20.4.1">
    <property type="organism ID" value="3352"/>
</dbReference>
<dbReference type="BRENDA" id="1.20.4.4">
    <property type="organism ID" value="3352"/>
</dbReference>
<dbReference type="SABIO-RK" id="P0A006"/>
<dbReference type="EvolutionaryTrace" id="P0A006"/>
<dbReference type="GO" id="GO:0005737">
    <property type="term" value="C:cytoplasm"/>
    <property type="evidence" value="ECO:0007669"/>
    <property type="project" value="UniProtKB-SubCell"/>
</dbReference>
<dbReference type="GO" id="GO:0030612">
    <property type="term" value="F:arsenate reductase (thioredoxin) activity"/>
    <property type="evidence" value="ECO:0007669"/>
    <property type="project" value="UniProtKB-UniRule"/>
</dbReference>
<dbReference type="GO" id="GO:0046872">
    <property type="term" value="F:metal ion binding"/>
    <property type="evidence" value="ECO:0007669"/>
    <property type="project" value="UniProtKB-KW"/>
</dbReference>
<dbReference type="GO" id="GO:0004725">
    <property type="term" value="F:protein tyrosine phosphatase activity"/>
    <property type="evidence" value="ECO:0007669"/>
    <property type="project" value="InterPro"/>
</dbReference>
<dbReference type="GO" id="GO:0046685">
    <property type="term" value="P:response to arsenic-containing substance"/>
    <property type="evidence" value="ECO:0007669"/>
    <property type="project" value="UniProtKB-KW"/>
</dbReference>
<dbReference type="CDD" id="cd16345">
    <property type="entry name" value="LMWP_ArsC"/>
    <property type="match status" value="1"/>
</dbReference>
<dbReference type="FunFam" id="3.40.50.2300:FF:000237">
    <property type="entry name" value="Arsenate reductase"/>
    <property type="match status" value="1"/>
</dbReference>
<dbReference type="Gene3D" id="3.40.50.2300">
    <property type="match status" value="1"/>
</dbReference>
<dbReference type="HAMAP" id="MF_01624">
    <property type="entry name" value="Arsenate_reduct"/>
    <property type="match status" value="1"/>
</dbReference>
<dbReference type="InterPro" id="IPR014064">
    <property type="entry name" value="Arsenate_reductase_ArsC"/>
</dbReference>
<dbReference type="InterPro" id="IPR023485">
    <property type="entry name" value="Ptyr_pPase"/>
</dbReference>
<dbReference type="InterPro" id="IPR036196">
    <property type="entry name" value="Ptyr_pPase_sf"/>
</dbReference>
<dbReference type="NCBIfam" id="TIGR02691">
    <property type="entry name" value="arsC_pI258_fam"/>
    <property type="match status" value="1"/>
</dbReference>
<dbReference type="NCBIfam" id="NF010053">
    <property type="entry name" value="PRK13530.1"/>
    <property type="match status" value="1"/>
</dbReference>
<dbReference type="PANTHER" id="PTHR43428">
    <property type="entry name" value="ARSENATE REDUCTASE"/>
    <property type="match status" value="1"/>
</dbReference>
<dbReference type="PANTHER" id="PTHR43428:SF1">
    <property type="entry name" value="ARSENATE REDUCTASE"/>
    <property type="match status" value="1"/>
</dbReference>
<dbReference type="Pfam" id="PF01451">
    <property type="entry name" value="LMWPc"/>
    <property type="match status" value="1"/>
</dbReference>
<dbReference type="SMART" id="SM00226">
    <property type="entry name" value="LMWPc"/>
    <property type="match status" value="1"/>
</dbReference>
<dbReference type="SUPFAM" id="SSF52788">
    <property type="entry name" value="Phosphotyrosine protein phosphatases I"/>
    <property type="match status" value="1"/>
</dbReference>
<sequence length="131" mass="14813">MDKKTIYFICTGNSCRSQMAEGWGKEILGEGWNVYSAGIETHGVNPKAIEAMKEVDIDISNHTSDLIDNDILKQSDLVVTLCSDADNNCPILPPNVKKEHWGFDDPAGKEWSEFQRVRDEIKLAIEKFKLR</sequence>
<feature type="chain" id="PRO_0000162523" description="Arsenate reductase">
    <location>
        <begin position="1"/>
        <end position="131"/>
    </location>
</feature>
<feature type="active site" description="Nucleophile" evidence="1 16 17">
    <location>
        <position position="10"/>
    </location>
</feature>
<feature type="active site" description="Nucleophile" evidence="1 16 17">
    <location>
        <position position="82"/>
    </location>
</feature>
<feature type="active site" description="Nucleophile" evidence="1 16 17">
    <location>
        <position position="89"/>
    </location>
</feature>
<feature type="binding site" evidence="3 5 6 8 10">
    <location>
        <position position="13"/>
    </location>
    <ligand>
        <name>K(+)</name>
        <dbReference type="ChEBI" id="CHEBI:29103"/>
    </ligand>
</feature>
<feature type="binding site" evidence="3 5 6 8 10">
    <location>
        <position position="36"/>
    </location>
    <ligand>
        <name>K(+)</name>
        <dbReference type="ChEBI" id="CHEBI:29103"/>
    </ligand>
</feature>
<feature type="binding site" evidence="3 5 6 8 10">
    <location>
        <position position="63"/>
    </location>
    <ligand>
        <name>K(+)</name>
        <dbReference type="ChEBI" id="CHEBI:29103"/>
    </ligand>
</feature>
<feature type="binding site" evidence="3 5 6 8 10">
    <location>
        <position position="65"/>
    </location>
    <ligand>
        <name>K(+)</name>
        <dbReference type="ChEBI" id="CHEBI:29103"/>
    </ligand>
</feature>
<feature type="disulfide bond" description="Redox-active; alternate" evidence="1 16 17 22">
    <location>
        <begin position="10"/>
        <end position="82"/>
    </location>
</feature>
<feature type="disulfide bond" description="Redox-active; alternate" evidence="1 15 16 17 19 21">
    <location>
        <begin position="82"/>
        <end position="89"/>
    </location>
</feature>
<feature type="sequence variant" description="In strain: SW18, SW4, SW24 and SW1.">
    <original>D</original>
    <variation>T</variation>
    <location>
        <position position="2"/>
    </location>
</feature>
<feature type="sequence variant" description="In strain: SW18.">
    <original>GKEILGEGWN</original>
    <variation>AKQILAKDWD</variation>
    <location>
        <begin position="24"/>
        <end position="33"/>
    </location>
</feature>
<feature type="sequence variant" description="In strain: SW24 and SW1.">
    <original>GKEILGEG</original>
    <variation>AKQILADD</variation>
    <location>
        <begin position="24"/>
        <end position="31"/>
    </location>
</feature>
<feature type="sequence variant" description="In strain: SW4.">
    <original>GKEILGEG</original>
    <variation>AKQILAED</variation>
    <location>
        <begin position="24"/>
        <end position="31"/>
    </location>
</feature>
<feature type="sequence variant" description="In strain: SW18, SW4, SW24 and SW1.">
    <original>D</original>
    <variation>G</variation>
    <location>
        <position position="56"/>
    </location>
</feature>
<feature type="sequence variant" description="In strain: SW24 and SW1.">
    <original>D</original>
    <variation>N</variation>
    <location>
        <position position="65"/>
    </location>
</feature>
<feature type="sequence variant" description="In strain: SW18, SW4, SW24 and SW1.">
    <original>DILKQSD</original>
    <variation>NIIKNSN</variation>
    <location>
        <begin position="70"/>
        <end position="76"/>
    </location>
</feature>
<feature type="sequence variant" description="In strain: SW18, SW4, SW24 and SW1.">
    <original>N</original>
    <variation>V</variation>
    <location>
        <position position="87"/>
    </location>
</feature>
<feature type="sequence variant" description="In strain: SW4, SW24 and SW1.">
    <original>I</original>
    <variation>S</variation>
    <location>
        <position position="91"/>
    </location>
</feature>
<feature type="sequence variant" description="In strain: SW18.">
    <original>I</original>
    <variation>T</variation>
    <location>
        <position position="91"/>
    </location>
</feature>
<feature type="sequence variant" description="In strain: SW18, SW4, SW24 and SW1.">
    <original>P</original>
    <variation>T</variation>
    <location>
        <position position="94"/>
    </location>
</feature>
<feature type="sequence variant" description="In strain: SW18, SW4, SW24 and SW1.">
    <original>E</original>
    <variation>P</variation>
    <location>
        <position position="110"/>
    </location>
</feature>
<feature type="sequence variant" description="In strain: SW4, SW24 and SW1.">
    <original>L</original>
    <variation>I</variation>
    <location>
        <position position="123"/>
    </location>
</feature>
<feature type="sequence variant" description="In strain: SW18.">
    <original>L</original>
    <variation>V</variation>
    <location>
        <position position="123"/>
    </location>
</feature>
<feature type="sequence variant" description="In strain: SW18, SW4, SW24 and SW1.">
    <original>K</original>
    <variation>N</variation>
    <location>
        <position position="127"/>
    </location>
</feature>
<feature type="sequence variant" description="In strain: SW18, SW4, SW24 and SW1.">
    <original>L</original>
    <variation>S</variation>
    <location>
        <position position="130"/>
    </location>
</feature>
<feature type="mutagenesis site" description="Loss of activity." evidence="2">
    <original>C</original>
    <variation>A</variation>
    <location>
        <position position="10"/>
    </location>
</feature>
<feature type="mutagenesis site" description="Loss of activity; when associated with A-15." evidence="2 3">
    <original>C</original>
    <variation>S</variation>
    <location>
        <position position="10"/>
    </location>
</feature>
<feature type="mutagenesis site" description="Loss of K(+) stabilization over Na(+)." evidence="6">
    <original>N</original>
    <variation>A</variation>
    <location>
        <position position="13"/>
    </location>
</feature>
<feature type="mutagenesis site" description="2-fold decrease in affinity for arsenate. Does not affect affinity for pNPP. Loss of activity; when associated with S-10." evidence="2 3">
    <original>C</original>
    <variation>A</variation>
    <location>
        <position position="15"/>
    </location>
</feature>
<feature type="mutagenesis site" description="Loss of activity." evidence="5">
    <original>R</original>
    <variation>K</variation>
    <location>
        <position position="16"/>
    </location>
</feature>
<feature type="mutagenesis site" description="5-fold decrease in catalytic efficiency." evidence="5">
    <original>S</original>
    <variation>A</variation>
    <location>
        <position position="17"/>
    </location>
</feature>
<feature type="mutagenesis site" description="Decreases the thermal stabilization effect of K(+)." evidence="6">
    <original>E</original>
    <variation>A</variation>
    <location>
        <position position="21"/>
    </location>
</feature>
<feature type="mutagenesis site" description="Strong impact on thermal stabilization." evidence="6">
    <original>S</original>
    <variation>A</variation>
    <location>
        <position position="36"/>
    </location>
</feature>
<feature type="mutagenesis site" description="Uncouples the sulfate effect from the potassium effect on the kinetics." evidence="10">
    <original>H</original>
    <variation>Q</variation>
    <location>
        <position position="62"/>
    </location>
</feature>
<feature type="mutagenesis site" description="Loss of K(+) stabilization over Na(+)." evidence="6">
    <original>D</original>
    <variation>A</variation>
    <location>
        <position position="65"/>
    </location>
</feature>
<feature type="mutagenesis site" description="Loss of activity." evidence="2">
    <original>C</original>
    <variation>S</variation>
    <location>
        <position position="82"/>
    </location>
</feature>
<feature type="mutagenesis site" description="Loss of activity." evidence="2">
    <original>C</original>
    <variation>A</variation>
    <location>
        <position position="89"/>
    </location>
</feature>
<feature type="mutagenesis site" description="Leads to a reductase locked in the C-10/C-82 intermediate form. Decrease in affinity for pNPP." evidence="3 5">
    <original>C</original>
    <variation>L</variation>
    <location>
        <position position="89"/>
    </location>
</feature>
<feature type="mutagenesis site" description="4-fold decrease in catalytic efficiency." evidence="5">
    <original>D</original>
    <variation>A</variation>
    <location>
        <position position="105"/>
    </location>
</feature>
<feature type="strand" evidence="27">
    <location>
        <begin position="4"/>
        <end position="15"/>
    </location>
</feature>
<feature type="helix" evidence="27">
    <location>
        <begin position="16"/>
        <end position="27"/>
    </location>
</feature>
<feature type="turn" evidence="27">
    <location>
        <begin position="29"/>
        <end position="31"/>
    </location>
</feature>
<feature type="strand" evidence="27">
    <location>
        <begin position="32"/>
        <end position="40"/>
    </location>
</feature>
<feature type="helix" evidence="27">
    <location>
        <begin position="46"/>
        <end position="54"/>
    </location>
</feature>
<feature type="helix" evidence="27">
    <location>
        <begin position="69"/>
        <end position="74"/>
    </location>
</feature>
<feature type="strand" evidence="27">
    <location>
        <begin position="76"/>
        <end position="80"/>
    </location>
</feature>
<feature type="helix" evidence="27">
    <location>
        <begin position="83"/>
        <end position="88"/>
    </location>
</feature>
<feature type="strand" evidence="27">
    <location>
        <begin position="96"/>
        <end position="100"/>
    </location>
</feature>
<feature type="helix" evidence="27">
    <location>
        <begin position="111"/>
        <end position="129"/>
    </location>
</feature>
<gene>
    <name evidence="1 13" type="primary">arsC</name>
</gene>
<geneLocation type="plasmid">
    <name>pI258</name>
</geneLocation>
<proteinExistence type="evidence at protein level"/>